<comment type="function">
    <text evidence="2">Forms oxaloacetate, a four-carbon dicarboxylic acid source for the tricarboxylic acid cycle.</text>
</comment>
<comment type="catalytic activity">
    <reaction evidence="2">
        <text>oxaloacetate + phosphate = phosphoenolpyruvate + hydrogencarbonate</text>
        <dbReference type="Rhea" id="RHEA:28370"/>
        <dbReference type="ChEBI" id="CHEBI:16452"/>
        <dbReference type="ChEBI" id="CHEBI:17544"/>
        <dbReference type="ChEBI" id="CHEBI:43474"/>
        <dbReference type="ChEBI" id="CHEBI:58702"/>
        <dbReference type="EC" id="4.1.1.31"/>
    </reaction>
</comment>
<comment type="cofactor">
    <cofactor evidence="2">
        <name>Mg(2+)</name>
        <dbReference type="ChEBI" id="CHEBI:18420"/>
    </cofactor>
</comment>
<comment type="activity regulation">
    <text evidence="1">The enzyme has distinct binding sites for each of the allosteric effectors such as acetyl-CoA, fructose 1,6-bisphosphate, guanosine 3'-diphosphate 5'-diphosphate, long chain fatty acids, and L-aspartate.</text>
</comment>
<comment type="subunit">
    <text evidence="2">Homotetramer.</text>
</comment>
<comment type="similarity">
    <text evidence="2">Belongs to the PEPCase type 1 family.</text>
</comment>
<name>CAPP_ECO57</name>
<reference key="1">
    <citation type="journal article" date="2001" name="Nature">
        <title>Genome sequence of enterohaemorrhagic Escherichia coli O157:H7.</title>
        <authorList>
            <person name="Perna N.T."/>
            <person name="Plunkett G. III"/>
            <person name="Burland V."/>
            <person name="Mau B."/>
            <person name="Glasner J.D."/>
            <person name="Rose D.J."/>
            <person name="Mayhew G.F."/>
            <person name="Evans P.S."/>
            <person name="Gregor J."/>
            <person name="Kirkpatrick H.A."/>
            <person name="Posfai G."/>
            <person name="Hackett J."/>
            <person name="Klink S."/>
            <person name="Boutin A."/>
            <person name="Shao Y."/>
            <person name="Miller L."/>
            <person name="Grotbeck E.J."/>
            <person name="Davis N.W."/>
            <person name="Lim A."/>
            <person name="Dimalanta E.T."/>
            <person name="Potamousis K."/>
            <person name="Apodaca J."/>
            <person name="Anantharaman T.S."/>
            <person name="Lin J."/>
            <person name="Yen G."/>
            <person name="Schwartz D.C."/>
            <person name="Welch R.A."/>
            <person name="Blattner F.R."/>
        </authorList>
    </citation>
    <scope>NUCLEOTIDE SEQUENCE [LARGE SCALE GENOMIC DNA]</scope>
    <source>
        <strain>O157:H7 / EDL933 / ATCC 700927 / EHEC</strain>
    </source>
</reference>
<reference key="2">
    <citation type="journal article" date="2001" name="DNA Res.">
        <title>Complete genome sequence of enterohemorrhagic Escherichia coli O157:H7 and genomic comparison with a laboratory strain K-12.</title>
        <authorList>
            <person name="Hayashi T."/>
            <person name="Makino K."/>
            <person name="Ohnishi M."/>
            <person name="Kurokawa K."/>
            <person name="Ishii K."/>
            <person name="Yokoyama K."/>
            <person name="Han C.-G."/>
            <person name="Ohtsubo E."/>
            <person name="Nakayama K."/>
            <person name="Murata T."/>
            <person name="Tanaka M."/>
            <person name="Tobe T."/>
            <person name="Iida T."/>
            <person name="Takami H."/>
            <person name="Honda T."/>
            <person name="Sasakawa C."/>
            <person name="Ogasawara N."/>
            <person name="Yasunaga T."/>
            <person name="Kuhara S."/>
            <person name="Shiba T."/>
            <person name="Hattori M."/>
            <person name="Shinagawa H."/>
        </authorList>
    </citation>
    <scope>NUCLEOTIDE SEQUENCE [LARGE SCALE GENOMIC DNA]</scope>
    <source>
        <strain>O157:H7 / Sakai / RIMD 0509952 / EHEC</strain>
    </source>
</reference>
<keyword id="KW-0021">Allosteric enzyme</keyword>
<keyword id="KW-0120">Carbon dioxide fixation</keyword>
<keyword id="KW-0456">Lyase</keyword>
<keyword id="KW-0460">Magnesium</keyword>
<keyword id="KW-1185">Reference proteome</keyword>
<gene>
    <name evidence="2" type="primary">ppc</name>
    <name type="ordered locus">Z5514</name>
    <name type="ordered locus">ECs4885</name>
</gene>
<protein>
    <recommendedName>
        <fullName evidence="2">Phosphoenolpyruvate carboxylase</fullName>
        <shortName evidence="2">PEPC</shortName>
        <shortName evidence="2">PEPCase</shortName>
        <ecNumber evidence="2">4.1.1.31</ecNumber>
    </recommendedName>
</protein>
<feature type="chain" id="PRO_0000166594" description="Phosphoenolpyruvate carboxylase">
    <location>
        <begin position="1"/>
        <end position="883"/>
    </location>
</feature>
<feature type="active site" evidence="2">
    <location>
        <position position="138"/>
    </location>
</feature>
<feature type="active site" evidence="2">
    <location>
        <position position="546"/>
    </location>
</feature>
<evidence type="ECO:0000250" key="1"/>
<evidence type="ECO:0000255" key="2">
    <source>
        <dbReference type="HAMAP-Rule" id="MF_00595"/>
    </source>
</evidence>
<dbReference type="EC" id="4.1.1.31" evidence="2"/>
<dbReference type="EMBL" id="AE005174">
    <property type="protein sequence ID" value="AAG59158.1"/>
    <property type="molecule type" value="Genomic_DNA"/>
</dbReference>
<dbReference type="EMBL" id="BA000007">
    <property type="protein sequence ID" value="BAB38308.1"/>
    <property type="molecule type" value="Genomic_DNA"/>
</dbReference>
<dbReference type="PIR" id="B86087">
    <property type="entry name" value="B86087"/>
</dbReference>
<dbReference type="PIR" id="E91239">
    <property type="entry name" value="E91239"/>
</dbReference>
<dbReference type="RefSeq" id="NP_312912.1">
    <property type="nucleotide sequence ID" value="NC_002695.1"/>
</dbReference>
<dbReference type="RefSeq" id="WP_001005582.1">
    <property type="nucleotide sequence ID" value="NZ_VOAI01000032.1"/>
</dbReference>
<dbReference type="SMR" id="Q8X743"/>
<dbReference type="STRING" id="155864.Z5514"/>
<dbReference type="GeneID" id="915001"/>
<dbReference type="KEGG" id="ece:Z5514"/>
<dbReference type="KEGG" id="ecs:ECs_4885"/>
<dbReference type="PATRIC" id="fig|386585.9.peg.5109"/>
<dbReference type="eggNOG" id="COG2352">
    <property type="taxonomic scope" value="Bacteria"/>
</dbReference>
<dbReference type="HOGENOM" id="CLU_006557_2_0_6"/>
<dbReference type="OMA" id="VFGWTQS"/>
<dbReference type="Proteomes" id="UP000000558">
    <property type="component" value="Chromosome"/>
</dbReference>
<dbReference type="Proteomes" id="UP000002519">
    <property type="component" value="Chromosome"/>
</dbReference>
<dbReference type="GO" id="GO:0005829">
    <property type="term" value="C:cytosol"/>
    <property type="evidence" value="ECO:0007669"/>
    <property type="project" value="TreeGrafter"/>
</dbReference>
<dbReference type="GO" id="GO:0000287">
    <property type="term" value="F:magnesium ion binding"/>
    <property type="evidence" value="ECO:0007669"/>
    <property type="project" value="UniProtKB-UniRule"/>
</dbReference>
<dbReference type="GO" id="GO:0008964">
    <property type="term" value="F:phosphoenolpyruvate carboxylase activity"/>
    <property type="evidence" value="ECO:0007669"/>
    <property type="project" value="UniProtKB-UniRule"/>
</dbReference>
<dbReference type="GO" id="GO:0015977">
    <property type="term" value="P:carbon fixation"/>
    <property type="evidence" value="ECO:0007669"/>
    <property type="project" value="UniProtKB-UniRule"/>
</dbReference>
<dbReference type="GO" id="GO:0006107">
    <property type="term" value="P:oxaloacetate metabolic process"/>
    <property type="evidence" value="ECO:0007669"/>
    <property type="project" value="UniProtKB-UniRule"/>
</dbReference>
<dbReference type="GO" id="GO:0006099">
    <property type="term" value="P:tricarboxylic acid cycle"/>
    <property type="evidence" value="ECO:0007669"/>
    <property type="project" value="InterPro"/>
</dbReference>
<dbReference type="FunFam" id="1.20.1440.90:FF:000002">
    <property type="entry name" value="Phosphoenolpyruvate carboxylase"/>
    <property type="match status" value="1"/>
</dbReference>
<dbReference type="Gene3D" id="1.20.1440.90">
    <property type="entry name" value="Phosphoenolpyruvate/pyruvate domain"/>
    <property type="match status" value="1"/>
</dbReference>
<dbReference type="HAMAP" id="MF_00595">
    <property type="entry name" value="PEPcase_type1"/>
    <property type="match status" value="1"/>
</dbReference>
<dbReference type="InterPro" id="IPR021135">
    <property type="entry name" value="PEP_COase"/>
</dbReference>
<dbReference type="InterPro" id="IPR022805">
    <property type="entry name" value="PEP_COase_bac/pln-type"/>
</dbReference>
<dbReference type="InterPro" id="IPR018129">
    <property type="entry name" value="PEP_COase_Lys_AS"/>
</dbReference>
<dbReference type="InterPro" id="IPR033129">
    <property type="entry name" value="PEPCASE_His_AS"/>
</dbReference>
<dbReference type="InterPro" id="IPR015813">
    <property type="entry name" value="Pyrv/PenolPyrv_kinase-like_dom"/>
</dbReference>
<dbReference type="NCBIfam" id="NF000584">
    <property type="entry name" value="PRK00009.1"/>
    <property type="match status" value="1"/>
</dbReference>
<dbReference type="PANTHER" id="PTHR30523">
    <property type="entry name" value="PHOSPHOENOLPYRUVATE CARBOXYLASE"/>
    <property type="match status" value="1"/>
</dbReference>
<dbReference type="PANTHER" id="PTHR30523:SF6">
    <property type="entry name" value="PHOSPHOENOLPYRUVATE CARBOXYLASE"/>
    <property type="match status" value="1"/>
</dbReference>
<dbReference type="Pfam" id="PF00311">
    <property type="entry name" value="PEPcase"/>
    <property type="match status" value="1"/>
</dbReference>
<dbReference type="PRINTS" id="PR00150">
    <property type="entry name" value="PEPCARBXLASE"/>
</dbReference>
<dbReference type="SUPFAM" id="SSF51621">
    <property type="entry name" value="Phosphoenolpyruvate/pyruvate domain"/>
    <property type="match status" value="1"/>
</dbReference>
<dbReference type="PROSITE" id="PS00781">
    <property type="entry name" value="PEPCASE_1"/>
    <property type="match status" value="1"/>
</dbReference>
<dbReference type="PROSITE" id="PS00393">
    <property type="entry name" value="PEPCASE_2"/>
    <property type="match status" value="1"/>
</dbReference>
<organism>
    <name type="scientific">Escherichia coli O157:H7</name>
    <dbReference type="NCBI Taxonomy" id="83334"/>
    <lineage>
        <taxon>Bacteria</taxon>
        <taxon>Pseudomonadati</taxon>
        <taxon>Pseudomonadota</taxon>
        <taxon>Gammaproteobacteria</taxon>
        <taxon>Enterobacterales</taxon>
        <taxon>Enterobacteriaceae</taxon>
        <taxon>Escherichia</taxon>
    </lineage>
</organism>
<sequence length="883" mass="99107">MNEQYSALRSNVSMLGKVLGETIKDALGEHILERVETIRKLSKSSRAGNDANRQELLTTLQNLSNDELLPVARAFSQFLNLANTAEQYHSISPKGEAASNPEVIARTLRKLKNQPELSEDTIKKAVESLSLELVLTAHPTEITRRTLIHKMVEVNACLKQLDNKDIADYEHNQLMRRLRQLIAQSWHTDEIRKLRPSPVDEAKWGFAVVENSLWQGVPNYLRELNEQLEENLGYKLPVEFVPVRFTSWMGGDRDGNPNVTADITRHVLLLSRWKATDLFLKDIQVLVSELSMVEATPELLALVGEEGAAEPYRYLMKNLRSRLMATQAWLEARLKGEELPKPEGLLTQNEELWEPLYACYQSLQACGMGIIANGDLLDTLRRVKCFGVPLVRIDIRQESTRHTEALGELTRYLGIGDYESWSEADKQAFLIRELNSKRPLLPRNWQPSAETREVLDTCQVIAEAPQGSIAAYVISMAKTPSDVLAVHLLLKEAGIGFAMPVAPLFETLDDLNNANDVMTQLLNIDWYRGLIQGKQMVMIGYSDSAKDAGVMAASWAQYQAQDALIKTCEKAGIELTLFHGRGGSIGRGGAPAHAALLSQPPGSLKGGLRVTEQGEMIRFKYGLPEITVSSLSLYTGAILEANLLPPPEPKESWRRIMDELSVISCDLYRGYVRENKDFVPYFRSATPEQELGKLPLGSRPAKRRPTGGVESLRAIPWIFAWTQNRLMLPAWLGAGTALQKVVEDGKQSELEAMCRDWPFFSTRLGMLEMVFAKADLWLAEYYDQRLVDKTLWPLGKELRNLQEEDIKVVLAIANDSHLMADLPWIAESIQLRNIYTDPLNVLQAELLHRSRQAEKEGQEPDPRVEQALMVTIAGIAAGMRNTG</sequence>
<accession>Q8X743</accession>
<proteinExistence type="inferred from homology"/>